<proteinExistence type="inferred from homology"/>
<accession>B0RUY8</accession>
<evidence type="ECO:0000255" key="1">
    <source>
        <dbReference type="HAMAP-Rule" id="MF_00270"/>
    </source>
</evidence>
<evidence type="ECO:0000305" key="2"/>
<sequence length="76" mass="8975">MSKFFRRRKFCKFTAEGVKEIDYKDLNTLRQYLTENGKIVPSRVTGTKSKYQRQLATAVKRSRFLALIPYTDNHDV</sequence>
<feature type="chain" id="PRO_1000114466" description="Small ribosomal subunit protein bS18">
    <location>
        <begin position="1"/>
        <end position="76"/>
    </location>
</feature>
<gene>
    <name evidence="1" type="primary">rpsR</name>
    <name type="ordered locus">xcc-b100_2696</name>
</gene>
<reference key="1">
    <citation type="journal article" date="2008" name="J. Biotechnol.">
        <title>The genome of Xanthomonas campestris pv. campestris B100 and its use for the reconstruction of metabolic pathways involved in xanthan biosynthesis.</title>
        <authorList>
            <person name="Vorhoelter F.-J."/>
            <person name="Schneiker S."/>
            <person name="Goesmann A."/>
            <person name="Krause L."/>
            <person name="Bekel T."/>
            <person name="Kaiser O."/>
            <person name="Linke B."/>
            <person name="Patschkowski T."/>
            <person name="Rueckert C."/>
            <person name="Schmid J."/>
            <person name="Sidhu V.K."/>
            <person name="Sieber V."/>
            <person name="Tauch A."/>
            <person name="Watt S.A."/>
            <person name="Weisshaar B."/>
            <person name="Becker A."/>
            <person name="Niehaus K."/>
            <person name="Puehler A."/>
        </authorList>
    </citation>
    <scope>NUCLEOTIDE SEQUENCE [LARGE SCALE GENOMIC DNA]</scope>
    <source>
        <strain>B100</strain>
    </source>
</reference>
<comment type="function">
    <text evidence="1">Binds as a heterodimer with protein bS6 to the central domain of the 16S rRNA, where it helps stabilize the platform of the 30S subunit.</text>
</comment>
<comment type="subunit">
    <text evidence="1">Part of the 30S ribosomal subunit. Forms a tight heterodimer with protein bS6.</text>
</comment>
<comment type="similarity">
    <text evidence="1">Belongs to the bacterial ribosomal protein bS18 family.</text>
</comment>
<name>RS18_XANCB</name>
<protein>
    <recommendedName>
        <fullName evidence="1">Small ribosomal subunit protein bS18</fullName>
    </recommendedName>
    <alternativeName>
        <fullName evidence="2">30S ribosomal protein S18</fullName>
    </alternativeName>
</protein>
<keyword id="KW-0687">Ribonucleoprotein</keyword>
<keyword id="KW-0689">Ribosomal protein</keyword>
<keyword id="KW-0694">RNA-binding</keyword>
<keyword id="KW-0699">rRNA-binding</keyword>
<organism>
    <name type="scientific">Xanthomonas campestris pv. campestris (strain B100)</name>
    <dbReference type="NCBI Taxonomy" id="509169"/>
    <lineage>
        <taxon>Bacteria</taxon>
        <taxon>Pseudomonadati</taxon>
        <taxon>Pseudomonadota</taxon>
        <taxon>Gammaproteobacteria</taxon>
        <taxon>Lysobacterales</taxon>
        <taxon>Lysobacteraceae</taxon>
        <taxon>Xanthomonas</taxon>
    </lineage>
</organism>
<dbReference type="EMBL" id="AM920689">
    <property type="protein sequence ID" value="CAP52057.1"/>
    <property type="molecule type" value="Genomic_DNA"/>
</dbReference>
<dbReference type="SMR" id="B0RUY8"/>
<dbReference type="KEGG" id="xca:xcc-b100_2696"/>
<dbReference type="HOGENOM" id="CLU_148710_2_3_6"/>
<dbReference type="Proteomes" id="UP000001188">
    <property type="component" value="Chromosome"/>
</dbReference>
<dbReference type="GO" id="GO:0022627">
    <property type="term" value="C:cytosolic small ribosomal subunit"/>
    <property type="evidence" value="ECO:0007669"/>
    <property type="project" value="TreeGrafter"/>
</dbReference>
<dbReference type="GO" id="GO:0070181">
    <property type="term" value="F:small ribosomal subunit rRNA binding"/>
    <property type="evidence" value="ECO:0007669"/>
    <property type="project" value="TreeGrafter"/>
</dbReference>
<dbReference type="GO" id="GO:0003735">
    <property type="term" value="F:structural constituent of ribosome"/>
    <property type="evidence" value="ECO:0007669"/>
    <property type="project" value="InterPro"/>
</dbReference>
<dbReference type="GO" id="GO:0006412">
    <property type="term" value="P:translation"/>
    <property type="evidence" value="ECO:0007669"/>
    <property type="project" value="UniProtKB-UniRule"/>
</dbReference>
<dbReference type="FunFam" id="4.10.640.10:FF:000001">
    <property type="entry name" value="30S ribosomal protein S18"/>
    <property type="match status" value="1"/>
</dbReference>
<dbReference type="Gene3D" id="4.10.640.10">
    <property type="entry name" value="Ribosomal protein S18"/>
    <property type="match status" value="1"/>
</dbReference>
<dbReference type="HAMAP" id="MF_00270">
    <property type="entry name" value="Ribosomal_bS18"/>
    <property type="match status" value="1"/>
</dbReference>
<dbReference type="InterPro" id="IPR001648">
    <property type="entry name" value="Ribosomal_bS18"/>
</dbReference>
<dbReference type="InterPro" id="IPR018275">
    <property type="entry name" value="Ribosomal_bS18_CS"/>
</dbReference>
<dbReference type="InterPro" id="IPR036870">
    <property type="entry name" value="Ribosomal_bS18_sf"/>
</dbReference>
<dbReference type="NCBIfam" id="TIGR00165">
    <property type="entry name" value="S18"/>
    <property type="match status" value="1"/>
</dbReference>
<dbReference type="PANTHER" id="PTHR13479">
    <property type="entry name" value="30S RIBOSOMAL PROTEIN S18"/>
    <property type="match status" value="1"/>
</dbReference>
<dbReference type="PANTHER" id="PTHR13479:SF40">
    <property type="entry name" value="SMALL RIBOSOMAL SUBUNIT PROTEIN BS18M"/>
    <property type="match status" value="1"/>
</dbReference>
<dbReference type="Pfam" id="PF01084">
    <property type="entry name" value="Ribosomal_S18"/>
    <property type="match status" value="1"/>
</dbReference>
<dbReference type="PRINTS" id="PR00974">
    <property type="entry name" value="RIBOSOMALS18"/>
</dbReference>
<dbReference type="SUPFAM" id="SSF46911">
    <property type="entry name" value="Ribosomal protein S18"/>
    <property type="match status" value="1"/>
</dbReference>
<dbReference type="PROSITE" id="PS00057">
    <property type="entry name" value="RIBOSOMAL_S18"/>
    <property type="match status" value="1"/>
</dbReference>